<dbReference type="EC" id="3.-.-.-"/>
<dbReference type="EMBL" id="AL123456">
    <property type="protein sequence ID" value="CCP43615.1"/>
    <property type="molecule type" value="Genomic_DNA"/>
</dbReference>
<dbReference type="PIR" id="C70816">
    <property type="entry name" value="C70816"/>
</dbReference>
<dbReference type="RefSeq" id="NP_215382.1">
    <property type="nucleotide sequence ID" value="NC_000962.3"/>
</dbReference>
<dbReference type="RefSeq" id="WP_003900223.1">
    <property type="nucleotide sequence ID" value="NZ_NVQJ01000040.1"/>
</dbReference>
<dbReference type="SMR" id="P9WG31"/>
<dbReference type="STRING" id="83332.Rv0867c"/>
<dbReference type="PaxDb" id="83332-Rv0867c"/>
<dbReference type="GeneID" id="885749"/>
<dbReference type="KEGG" id="mtu:Rv0867c"/>
<dbReference type="KEGG" id="mtv:RVBD_0867c"/>
<dbReference type="TubercuList" id="Rv0867c"/>
<dbReference type="eggNOG" id="COG1652">
    <property type="taxonomic scope" value="Bacteria"/>
</dbReference>
<dbReference type="InParanoid" id="P9WG31"/>
<dbReference type="OrthoDB" id="1404170at2"/>
<dbReference type="Proteomes" id="UP000001584">
    <property type="component" value="Chromosome"/>
</dbReference>
<dbReference type="GO" id="GO:0005576">
    <property type="term" value="C:extracellular region"/>
    <property type="evidence" value="ECO:0000314"/>
    <property type="project" value="MTBBASE"/>
</dbReference>
<dbReference type="GO" id="GO:0016787">
    <property type="term" value="F:hydrolase activity"/>
    <property type="evidence" value="ECO:0007669"/>
    <property type="project" value="UniProtKB-KW"/>
</dbReference>
<dbReference type="GO" id="GO:0010629">
    <property type="term" value="P:negative regulation of gene expression"/>
    <property type="evidence" value="ECO:0000314"/>
    <property type="project" value="MTBBASE"/>
</dbReference>
<dbReference type="GO" id="GO:0009372">
    <property type="term" value="P:quorum sensing"/>
    <property type="evidence" value="ECO:0000304"/>
    <property type="project" value="UniProtKB"/>
</dbReference>
<dbReference type="GO" id="GO:0042127">
    <property type="term" value="P:regulation of cell population proliferation"/>
    <property type="evidence" value="ECO:0000314"/>
    <property type="project" value="MTBBASE"/>
</dbReference>
<dbReference type="CDD" id="cd13925">
    <property type="entry name" value="RPF"/>
    <property type="match status" value="1"/>
</dbReference>
<dbReference type="FunFam" id="1.10.530.10:FF:000029">
    <property type="entry name" value="Resuscitation-promoting factor RpfA"/>
    <property type="match status" value="1"/>
</dbReference>
<dbReference type="Gene3D" id="1.10.530.10">
    <property type="match status" value="1"/>
</dbReference>
<dbReference type="InterPro" id="IPR023346">
    <property type="entry name" value="Lysozyme-like_dom_sf"/>
</dbReference>
<dbReference type="InterPro" id="IPR010618">
    <property type="entry name" value="RPF"/>
</dbReference>
<dbReference type="Pfam" id="PF06737">
    <property type="entry name" value="Transglycosylas"/>
    <property type="match status" value="1"/>
</dbReference>
<dbReference type="SUPFAM" id="SSF53955">
    <property type="entry name" value="Lysozyme-like"/>
    <property type="match status" value="1"/>
</dbReference>
<keyword id="KW-0378">Hydrolase</keyword>
<keyword id="KW-1185">Reference proteome</keyword>
<keyword id="KW-0677">Repeat</keyword>
<keyword id="KW-0732">Signal</keyword>
<keyword id="KW-0843">Virulence</keyword>
<accession>P9WG31</accession>
<accession>F2GIY6</accession>
<accession>L0T504</accession>
<accession>O53879</accession>
<accession>Q7D947</accession>
<evidence type="ECO:0000255" key="1"/>
<evidence type="ECO:0000256" key="2">
    <source>
        <dbReference type="SAM" id="MobiDB-lite"/>
    </source>
</evidence>
<evidence type="ECO:0000269" key="3">
    <source>
    </source>
</evidence>
<evidence type="ECO:0000269" key="4">
    <source>
    </source>
</evidence>
<evidence type="ECO:0000269" key="5">
    <source>
    </source>
</evidence>
<evidence type="ECO:0000269" key="6">
    <source>
    </source>
</evidence>
<evidence type="ECO:0000269" key="7">
    <source>
    </source>
</evidence>
<evidence type="ECO:0000305" key="8"/>
<organism>
    <name type="scientific">Mycobacterium tuberculosis (strain ATCC 25618 / H37Rv)</name>
    <dbReference type="NCBI Taxonomy" id="83332"/>
    <lineage>
        <taxon>Bacteria</taxon>
        <taxon>Bacillati</taxon>
        <taxon>Actinomycetota</taxon>
        <taxon>Actinomycetes</taxon>
        <taxon>Mycobacteriales</taxon>
        <taxon>Mycobacteriaceae</taxon>
        <taxon>Mycobacterium</taxon>
        <taxon>Mycobacterium tuberculosis complex</taxon>
    </lineage>
</organism>
<gene>
    <name type="primary">rpfA</name>
    <name type="ordered locus">Rv0867c</name>
    <name type="ORF">MTV043.60c</name>
</gene>
<feature type="signal peptide" evidence="1">
    <location>
        <begin position="1"/>
        <end position="33"/>
    </location>
</feature>
<feature type="chain" id="PRO_0000421025" description="Resuscitation-promoting factor RpfA">
    <location>
        <begin position="34"/>
        <end position="407"/>
    </location>
</feature>
<feature type="repeat" description="1">
    <location>
        <begin position="178"/>
        <end position="185"/>
    </location>
</feature>
<feature type="repeat" description="2">
    <location>
        <begin position="186"/>
        <end position="193"/>
    </location>
</feature>
<feature type="repeat" description="3">
    <location>
        <begin position="218"/>
        <end position="225"/>
    </location>
</feature>
<feature type="repeat" description="4">
    <location>
        <begin position="226"/>
        <end position="233"/>
    </location>
</feature>
<feature type="repeat" description="5">
    <location>
        <begin position="240"/>
        <end position="247"/>
    </location>
</feature>
<feature type="repeat" description="6">
    <location>
        <begin position="248"/>
        <end position="255"/>
    </location>
</feature>
<feature type="repeat" description="7">
    <location>
        <begin position="274"/>
        <end position="281"/>
    </location>
</feature>
<feature type="repeat" description="8">
    <location>
        <begin position="287"/>
        <end position="294"/>
    </location>
</feature>
<feature type="repeat" description="9">
    <location>
        <begin position="295"/>
        <end position="302"/>
    </location>
</feature>
<feature type="repeat" description="10">
    <location>
        <begin position="303"/>
        <end position="310"/>
    </location>
</feature>
<feature type="repeat" description="11">
    <location>
        <begin position="311"/>
        <end position="318"/>
    </location>
</feature>
<feature type="repeat" description="12">
    <location>
        <begin position="353"/>
        <end position="359"/>
    </location>
</feature>
<feature type="region of interest" description="Disordered" evidence="2">
    <location>
        <begin position="142"/>
        <end position="253"/>
    </location>
</feature>
<feature type="region of interest" description="12 X 8 AA approximate repeats of A-P-A-D-L-A-P-P">
    <location>
        <begin position="178"/>
        <end position="359"/>
    </location>
</feature>
<feature type="region of interest" description="Disordered" evidence="2">
    <location>
        <begin position="271"/>
        <end position="371"/>
    </location>
</feature>
<feature type="compositionally biased region" description="Pro residues" evidence="2">
    <location>
        <begin position="148"/>
        <end position="159"/>
    </location>
</feature>
<feature type="compositionally biased region" description="Low complexity" evidence="2">
    <location>
        <begin position="160"/>
        <end position="170"/>
    </location>
</feature>
<feature type="compositionally biased region" description="Pro residues" evidence="2">
    <location>
        <begin position="171"/>
        <end position="193"/>
    </location>
</feature>
<feature type="compositionally biased region" description="Low complexity" evidence="2">
    <location>
        <begin position="194"/>
        <end position="210"/>
    </location>
</feature>
<feature type="compositionally biased region" description="Pro residues" evidence="2">
    <location>
        <begin position="211"/>
        <end position="249"/>
    </location>
</feature>
<feature type="compositionally biased region" description="Low complexity" evidence="2">
    <location>
        <begin position="274"/>
        <end position="292"/>
    </location>
</feature>
<feature type="compositionally biased region" description="Pro residues" evidence="2">
    <location>
        <begin position="293"/>
        <end position="312"/>
    </location>
</feature>
<feature type="compositionally biased region" description="Pro residues" evidence="2">
    <location>
        <begin position="350"/>
        <end position="361"/>
    </location>
</feature>
<comment type="function">
    <text evidence="3">Factor that stimulates resuscitation of dormant cells. Has peptidoglycan (PG) hydrolytic activity. Active in the pM concentration range. Has little to no effect on actively-growing cells. PG fragments could either directly activate the resuscitation pathway of dormant bacteria or serve as a substrate for endogenous Rpf, resulting in low molecular weight products with resuscitation activity. Stimulates growth of stationary phase M.bovis (a slow-growing Mycobacterium), reduces the lag phase of diluted fast-growers M.smegmatis and Micrococcus luteus.</text>
</comment>
<comment type="induction">
    <text evidence="3 6">Expressed in actively growing cells, activated by CRP.</text>
</comment>
<comment type="disruption phenotype">
    <text evidence="5 7">Not essential, disruption of rpfA alone has no effect on growth or survival in liquid culture, nor in mouse infection models, although cells are clumpy after 2 weeks in stirred culture. Alterations in gene expression are seen. All 5 genes in this family can be deleted without affecting growth in culture, however triple deletion mutants (rpfA-rpfC-rpfB or rpfA-rpfC-rpfD) are not able to resuscitate spontaneously in the presence or absence of O(2), and are attenuated in a mouse infection model.</text>
</comment>
<comment type="biotechnology">
    <text evidence="4">Might be a good vaccine candidate.</text>
</comment>
<comment type="similarity">
    <text evidence="8">Belongs to the transglycosylase family. Rpf subfamily.</text>
</comment>
<protein>
    <recommendedName>
        <fullName>Resuscitation-promoting factor RpfA</fullName>
        <ecNumber>3.-.-.-</ecNumber>
    </recommendedName>
</protein>
<sequence>MSGRHRKPTTSNVSVAKIAFTGAVLGGGGIAMAAQATAATDGEWDQVARCESGGNWSINTGNGYLGGLQFTQSTWAAHGGGEFAPSAQLASREQQIAVGERVLATQGRGAWPVCGRGLSNATPREVLPASAAMDAPLDAAAVNGEPAPLAPPPADPAPPVELAANDLPAPLGEPLPAAPADPAPPADLAPPAPADVAPPVELAVNDLPAPLGEPLPAAPADPAPPADLAPPAPADLAPPAPADLAPPAPADLAPPVELAVNDLPAPLGEPLPAAPAELAPPADLAPASADLAPPAPADLAPPAPAELAPPAPADLAPPAAVNEQTAPGDQPATAPGGPVGLATDLELPEPDPQPADAPPPGDVTEAPAETPQVSNIAYTKKLWQAIRAQDVCGNDALDSLAQPYVIG</sequence>
<proteinExistence type="evidence at protein level"/>
<reference key="1">
    <citation type="journal article" date="1998" name="Nature">
        <title>Deciphering the biology of Mycobacterium tuberculosis from the complete genome sequence.</title>
        <authorList>
            <person name="Cole S.T."/>
            <person name="Brosch R."/>
            <person name="Parkhill J."/>
            <person name="Garnier T."/>
            <person name="Churcher C.M."/>
            <person name="Harris D.E."/>
            <person name="Gordon S.V."/>
            <person name="Eiglmeier K."/>
            <person name="Gas S."/>
            <person name="Barry C.E. III"/>
            <person name="Tekaia F."/>
            <person name="Badcock K."/>
            <person name="Basham D."/>
            <person name="Brown D."/>
            <person name="Chillingworth T."/>
            <person name="Connor R."/>
            <person name="Davies R.M."/>
            <person name="Devlin K."/>
            <person name="Feltwell T."/>
            <person name="Gentles S."/>
            <person name="Hamlin N."/>
            <person name="Holroyd S."/>
            <person name="Hornsby T."/>
            <person name="Jagels K."/>
            <person name="Krogh A."/>
            <person name="McLean J."/>
            <person name="Moule S."/>
            <person name="Murphy L.D."/>
            <person name="Oliver S."/>
            <person name="Osborne J."/>
            <person name="Quail M.A."/>
            <person name="Rajandream M.A."/>
            <person name="Rogers J."/>
            <person name="Rutter S."/>
            <person name="Seeger K."/>
            <person name="Skelton S."/>
            <person name="Squares S."/>
            <person name="Squares R."/>
            <person name="Sulston J.E."/>
            <person name="Taylor K."/>
            <person name="Whitehead S."/>
            <person name="Barrell B.G."/>
        </authorList>
    </citation>
    <scope>NUCLEOTIDE SEQUENCE [LARGE SCALE GENOMIC DNA]</scope>
    <source>
        <strain>ATCC 25618 / H37Rv</strain>
    </source>
</reference>
<reference key="2">
    <citation type="journal article" date="2002" name="Mol. Microbiol.">
        <title>A family of autocrine growth factors in Mycobacterium tuberculosis.</title>
        <authorList>
            <person name="Mukamolova G.V."/>
            <person name="Turapov O.A."/>
            <person name="Young D.I."/>
            <person name="Kaprelyants A.S."/>
            <person name="Kell D.B."/>
            <person name="Young M."/>
        </authorList>
    </citation>
    <scope>FUNCTION</scope>
    <scope>INDUCTION</scope>
    <source>
        <strain>ATCC 25618 / H37Rv</strain>
    </source>
</reference>
<reference key="3">
    <citation type="journal article" date="2003" name="Infect. Immun.">
        <title>Proteins of the Rpf family: immune cell reactivity and vaccination efficacy against tuberculosis in mice.</title>
        <authorList>
            <person name="Yeremeev V.V."/>
            <person name="Kondratieva T.K."/>
            <person name="Rubakova E.I."/>
            <person name="Petrovskaya S.N."/>
            <person name="Kazarian K.A."/>
            <person name="Telkov M.V."/>
            <person name="Biketov S.F."/>
            <person name="Kaprelyants A.S."/>
            <person name="Apt A.S."/>
        </authorList>
    </citation>
    <scope>BIOTECHNOLOGY</scope>
    <source>
        <strain>ATCC 25618 / H37Rv</strain>
    </source>
</reference>
<reference key="4">
    <citation type="journal article" date="2004" name="Tuberculosis">
        <title>Global expression profiling of strains harbouring null mutations reveals that the five rpf-like genes of Mycobacterium tuberculosis show functional redundancy.</title>
        <authorList>
            <person name="Downing K.J."/>
            <person name="Betts J.C."/>
            <person name="Young D.I."/>
            <person name="McAdam R.A."/>
            <person name="Kelly F."/>
            <person name="Young M."/>
            <person name="Mizrahi V."/>
        </authorList>
    </citation>
    <scope>DISRUPTION PHENOTYPE</scope>
    <source>
        <strain>ATCC 25618 / H37Rv</strain>
    </source>
</reference>
<reference key="5">
    <citation type="journal article" date="2005" name="Mol. Microbiol.">
        <title>A member of the cAMP receptor protein family of transcription regulators in Mycobacterium tuberculosis is required for virulence in mice and controls transcription of the rpfA gene coding for a resuscitation promoting factor.</title>
        <authorList>
            <person name="Rickman L."/>
            <person name="Scott C."/>
            <person name="Hunt D.M."/>
            <person name="Hutchinson T."/>
            <person name="Menendez M.C."/>
            <person name="Whalan R."/>
            <person name="Hinds J."/>
            <person name="Colston M.J."/>
            <person name="Green J."/>
            <person name="Buxton R.S."/>
        </authorList>
    </citation>
    <scope>INDUCTION</scope>
    <source>
        <strain>ATCC 25618 / H37Rv</strain>
    </source>
</reference>
<reference key="6">
    <citation type="journal article" date="2008" name="Mol. Microbiol.">
        <title>The resuscitation-promoting factors of Mycobacterium tuberculosis are required for virulence and resuscitation from dormancy but are collectively dispensable for growth in vitro.</title>
        <authorList>
            <person name="Kana B.D."/>
            <person name="Gordhan B.G."/>
            <person name="Downing K.J."/>
            <person name="Sung N."/>
            <person name="Vostroktunova G."/>
            <person name="Machowski E.E."/>
            <person name="Tsenova L."/>
            <person name="Young M."/>
            <person name="Kaprelyants A."/>
            <person name="Kaplan G."/>
            <person name="Mizrahi V."/>
        </authorList>
    </citation>
    <scope>DISRUPTION PHENOTYPE</scope>
    <source>
        <strain>ATCC 25618 / H37Rv</strain>
    </source>
</reference>
<name>RPFA_MYCTU</name>